<proteinExistence type="inferred from homology"/>
<dbReference type="EC" id="2.7.7.7"/>
<dbReference type="EMBL" id="AY261361">
    <property type="status" value="NOT_ANNOTATED_CDS"/>
    <property type="molecule type" value="Genomic_DNA"/>
</dbReference>
<dbReference type="SMR" id="P0C972"/>
<dbReference type="Proteomes" id="UP000000860">
    <property type="component" value="Segment"/>
</dbReference>
<dbReference type="GO" id="GO:0003677">
    <property type="term" value="F:DNA binding"/>
    <property type="evidence" value="ECO:0007669"/>
    <property type="project" value="UniProtKB-KW"/>
</dbReference>
<dbReference type="GO" id="GO:0003887">
    <property type="term" value="F:DNA-directed DNA polymerase activity"/>
    <property type="evidence" value="ECO:0007669"/>
    <property type="project" value="UniProtKB-KW"/>
</dbReference>
<dbReference type="GO" id="GO:0000166">
    <property type="term" value="F:nucleotide binding"/>
    <property type="evidence" value="ECO:0007669"/>
    <property type="project" value="InterPro"/>
</dbReference>
<dbReference type="GO" id="GO:0006260">
    <property type="term" value="P:DNA replication"/>
    <property type="evidence" value="ECO:0007669"/>
    <property type="project" value="UniProtKB-KW"/>
</dbReference>
<dbReference type="GO" id="GO:0039693">
    <property type="term" value="P:viral DNA genome replication"/>
    <property type="evidence" value="ECO:0007669"/>
    <property type="project" value="UniProtKB-KW"/>
</dbReference>
<dbReference type="Gene3D" id="1.10.132.60">
    <property type="entry name" value="DNA polymerase family B, C-terminal domain"/>
    <property type="match status" value="1"/>
</dbReference>
<dbReference type="Gene3D" id="1.10.287.690">
    <property type="entry name" value="Helix hairpin bin"/>
    <property type="match status" value="1"/>
</dbReference>
<dbReference type="Gene3D" id="3.90.1600.10">
    <property type="entry name" value="Palm domain of DNA polymerase"/>
    <property type="match status" value="1"/>
</dbReference>
<dbReference type="Gene3D" id="3.30.420.10">
    <property type="entry name" value="Ribonuclease H-like superfamily/Ribonuclease H"/>
    <property type="match status" value="1"/>
</dbReference>
<dbReference type="InterPro" id="IPR006172">
    <property type="entry name" value="DNA-dir_DNA_pol_B"/>
</dbReference>
<dbReference type="InterPro" id="IPR017964">
    <property type="entry name" value="DNA-dir_DNA_pol_B_CS"/>
</dbReference>
<dbReference type="InterPro" id="IPR006133">
    <property type="entry name" value="DNA-dir_DNA_pol_B_exonuc"/>
</dbReference>
<dbReference type="InterPro" id="IPR006134">
    <property type="entry name" value="DNA-dir_DNA_pol_B_multi_dom"/>
</dbReference>
<dbReference type="InterPro" id="IPR043502">
    <property type="entry name" value="DNA/RNA_pol_sf"/>
</dbReference>
<dbReference type="InterPro" id="IPR042087">
    <property type="entry name" value="DNA_pol_B_thumb"/>
</dbReference>
<dbReference type="InterPro" id="IPR023211">
    <property type="entry name" value="DNA_pol_palm_dom_sf"/>
</dbReference>
<dbReference type="InterPro" id="IPR050240">
    <property type="entry name" value="DNA_pol_type-B"/>
</dbReference>
<dbReference type="InterPro" id="IPR012337">
    <property type="entry name" value="RNaseH-like_sf"/>
</dbReference>
<dbReference type="InterPro" id="IPR036397">
    <property type="entry name" value="RNaseH_sf"/>
</dbReference>
<dbReference type="PANTHER" id="PTHR10322">
    <property type="entry name" value="DNA POLYMERASE CATALYTIC SUBUNIT"/>
    <property type="match status" value="1"/>
</dbReference>
<dbReference type="PANTHER" id="PTHR10322:SF23">
    <property type="entry name" value="DNA POLYMERASE DELTA CATALYTIC SUBUNIT"/>
    <property type="match status" value="1"/>
</dbReference>
<dbReference type="Pfam" id="PF00136">
    <property type="entry name" value="DNA_pol_B"/>
    <property type="match status" value="1"/>
</dbReference>
<dbReference type="Pfam" id="PF03104">
    <property type="entry name" value="DNA_pol_B_exo1"/>
    <property type="match status" value="1"/>
</dbReference>
<dbReference type="PRINTS" id="PR00106">
    <property type="entry name" value="DNAPOLB"/>
</dbReference>
<dbReference type="SMART" id="SM00486">
    <property type="entry name" value="POLBc"/>
    <property type="match status" value="1"/>
</dbReference>
<dbReference type="SUPFAM" id="SSF56672">
    <property type="entry name" value="DNA/RNA polymerases"/>
    <property type="match status" value="1"/>
</dbReference>
<dbReference type="SUPFAM" id="SSF53098">
    <property type="entry name" value="Ribonuclease H-like"/>
    <property type="match status" value="1"/>
</dbReference>
<dbReference type="PROSITE" id="PS00116">
    <property type="entry name" value="DNA_POLYMERASE_B"/>
    <property type="match status" value="1"/>
</dbReference>
<sequence length="1206" mass="139527">MDRSEIVARENPVITQRVTNLLRTNAPLLFMPIDIHEVRYGAYMLFMYGSLENGYKAEVRIENIPVFFDVQIESDNTNQLFLKSLLTAENITYERLESITQRPVMGYREKEKEFAPYIRIFFKSLYERRKAITYLNNMGYNTAADDTTCYYRMVSRELKLPLTSWIQLQNYSYEPRGLVHRFSVTPDDLVSYQDDGLTDHSIVMAYDIETYSPVKGTVPDPNQANDVVFMICMHIFWIHSTEPLASTCITMVPCKKSSEWTTIVCSSEKNLLLSFAEQFSRWVPDICTGFNDSRYDWPFIVEKSMQHGILEEIFNKMSLFWNQKLDTILKCYYVKEKRVKISAEKSIISSFLHTPGCLPMDVRNMCMQIYPKAEKTSLKAFLENCGLDSKVDLPYHLMWKYYETRDSEKMADVAYYCIIDAQRCQDLLVRHNVIPDRREVGILSYTSLYDCIYYAGGHKVCNMLIAYAIHDEYGRIACSTIARGKREHGKYPGAFVIDPIKGLEQDKPTTGLDFASLYPSLIMAYNFSPEKFVASRDEANNLMAKGESLHYVSFHFNNRLVEGWFVRHNNVPDKMGLYPKVLIDLLNKRTILKQELKKLGEKKECIHESHPGFKELQFRHAMVDAKQKALKIFMNTFYGEAGNNLSPFFLLPLAGGVTSSGQYNLKLVYNFVINKGYGIKYGDTDSLYITCPDSLYTEVTEAYLNSQKTIKHYEQLCHEKVLLSMKAMSTLCAEVNEYLRQDNGTSYLRMAYEEVLFPVCFTGKKKYYGIAHVNTPNFNTKELFIRGIDIIKQGQTKLTKTIGMRIMEESMKLRRPEDHRPPLIEIVKTVLKDAVVNMKQWNFEDFIQTDAWRPDKDNKAVQIFMSRMHARREQLKKHGAAASQFAEPEPGERFSYVIVEKQVQFDIQGHRTDTSRKGDKMEYVSEAKAKNLPIDILFYINNYVLGLCARFINENEEFQPPDNVSNKDEYAQRRAKSYLQKFVQSIHPKDKSVIKQGIVHRQCYKYVHQEIKKKIGIFADLYKEFFNNTTNPIESFIQSTQFMIQYSDEEQKVNHSVKKMVEQHATASNRAGNPAGNPAGNPAGNALMRAIFTQLITEEKKIVQALYSKGDEIHDLLTYIINNINYKIATFQTKQMLTFELSSTHVELLLKLNKTWLILTGIHVAKKHLQALLDSYNNEPPSKTFIQQAIKEECSSIKPSCYDFIS</sequence>
<accession>P0C972</accession>
<keyword id="KW-0235">DNA replication</keyword>
<keyword id="KW-0238">DNA-binding</keyword>
<keyword id="KW-0239">DNA-directed DNA polymerase</keyword>
<keyword id="KW-0548">Nucleotidyltransferase</keyword>
<keyword id="KW-0677">Repeat</keyword>
<keyword id="KW-0808">Transferase</keyword>
<keyword id="KW-1194">Viral DNA replication</keyword>
<organismHost>
    <name type="scientific">Ornithodoros</name>
    <name type="common">relapsing fever ticks</name>
    <dbReference type="NCBI Taxonomy" id="6937"/>
</organismHost>
<organismHost>
    <name type="scientific">Phacochoerus aethiopicus</name>
    <name type="common">Warthog</name>
    <dbReference type="NCBI Taxonomy" id="85517"/>
</organismHost>
<organismHost>
    <name type="scientific">Phacochoerus africanus</name>
    <name type="common">Warthog</name>
    <dbReference type="NCBI Taxonomy" id="41426"/>
</organismHost>
<organismHost>
    <name type="scientific">Potamochoerus larvatus</name>
    <name type="common">Bushpig</name>
    <dbReference type="NCBI Taxonomy" id="273792"/>
</organismHost>
<organismHost>
    <name type="scientific">Sus scrofa</name>
    <name type="common">Pig</name>
    <dbReference type="NCBI Taxonomy" id="9823"/>
</organismHost>
<protein>
    <recommendedName>
        <fullName evidence="2">DNA polymerase beta</fullName>
        <ecNumber>2.7.7.7</ecNumber>
    </recommendedName>
</protein>
<reference key="1">
    <citation type="submission" date="2003-03" db="EMBL/GenBank/DDBJ databases">
        <title>African swine fever virus genomes.</title>
        <authorList>
            <person name="Kutish G.F."/>
            <person name="Rock D.L."/>
        </authorList>
    </citation>
    <scope>NUCLEOTIDE SEQUENCE [LARGE SCALE GENOMIC DNA]</scope>
</reference>
<gene>
    <name type="ordered locus">Mal-098</name>
</gene>
<comment type="function">
    <text evidence="1">DNA-directed DNA polymerase involved in viral DNA replication.</text>
</comment>
<comment type="catalytic activity">
    <reaction>
        <text>DNA(n) + a 2'-deoxyribonucleoside 5'-triphosphate = DNA(n+1) + diphosphate</text>
        <dbReference type="Rhea" id="RHEA:22508"/>
        <dbReference type="Rhea" id="RHEA-COMP:17339"/>
        <dbReference type="Rhea" id="RHEA-COMP:17340"/>
        <dbReference type="ChEBI" id="CHEBI:33019"/>
        <dbReference type="ChEBI" id="CHEBI:61560"/>
        <dbReference type="ChEBI" id="CHEBI:173112"/>
        <dbReference type="EC" id="2.7.7.7"/>
    </reaction>
</comment>
<comment type="induction">
    <text evidence="3">Expressed in the early phase of the viral replicative cycle.</text>
</comment>
<comment type="miscellaneous">
    <text>Consistent with its intracellular location, ASFV encodes its own replicative DNA polymerase and three base excision repair enzymes: a class II AP endonuclease, the repair polymerase Pol X, and an ATP-dependent DNA ligase.</text>
</comment>
<comment type="similarity">
    <text evidence="3">Belongs to the DNA polymerase type-B family.</text>
</comment>
<organism>
    <name type="scientific">African swine fever virus (isolate Tick/Malawi/Lil 20-1/1983)</name>
    <name type="common">ASFV</name>
    <dbReference type="NCBI Taxonomy" id="10500"/>
    <lineage>
        <taxon>Viruses</taxon>
        <taxon>Varidnaviria</taxon>
        <taxon>Bamfordvirae</taxon>
        <taxon>Nucleocytoviricota</taxon>
        <taxon>Pokkesviricetes</taxon>
        <taxon>Asfuvirales</taxon>
        <taxon>Asfarviridae</taxon>
        <taxon>Asfivirus</taxon>
        <taxon>African swine fever virus</taxon>
    </lineage>
</organism>
<name>DPOL_ASFM2</name>
<feature type="chain" id="PRO_0000373071" description="DNA polymerase beta">
    <location>
        <begin position="1"/>
        <end position="1206"/>
    </location>
</feature>
<feature type="repeat" description="1">
    <location>
        <begin position="1071"/>
        <end position="1074"/>
    </location>
</feature>
<feature type="repeat" description="2">
    <location>
        <begin position="1075"/>
        <end position="1078"/>
    </location>
</feature>
<feature type="repeat" description="3">
    <location>
        <begin position="1079"/>
        <end position="1082"/>
    </location>
</feature>
<feature type="repeat" description="4">
    <location>
        <begin position="1083"/>
        <end position="1086"/>
    </location>
</feature>
<feature type="region of interest" description="4 X 4 AA tandem repeats of A-G-[NK]-[PA]">
    <location>
        <begin position="1071"/>
        <end position="1086"/>
    </location>
</feature>
<evidence type="ECO:0000250" key="1"/>
<evidence type="ECO:0000250" key="2">
    <source>
        <dbReference type="UniProtKB" id="P42489"/>
    </source>
</evidence>
<evidence type="ECO:0000305" key="3"/>